<evidence type="ECO:0000255" key="1">
    <source>
        <dbReference type="HAMAP-Rule" id="MF_00046"/>
    </source>
</evidence>
<reference key="1">
    <citation type="journal article" date="2009" name="PLoS ONE">
        <title>Salmonella paratyphi C: genetic divergence from Salmonella choleraesuis and pathogenic convergence with Salmonella typhi.</title>
        <authorList>
            <person name="Liu W.-Q."/>
            <person name="Feng Y."/>
            <person name="Wang Y."/>
            <person name="Zou Q.-H."/>
            <person name="Chen F."/>
            <person name="Guo J.-T."/>
            <person name="Peng Y.-H."/>
            <person name="Jin Y."/>
            <person name="Li Y.-G."/>
            <person name="Hu S.-N."/>
            <person name="Johnston R.N."/>
            <person name="Liu G.-R."/>
            <person name="Liu S.-L."/>
        </authorList>
    </citation>
    <scope>NUCLEOTIDE SEQUENCE [LARGE SCALE GENOMIC DNA]</scope>
    <source>
        <strain>RKS4594</strain>
    </source>
</reference>
<protein>
    <recommendedName>
        <fullName evidence="1">UDP-N-acetylmuramate--L-alanine ligase</fullName>
        <ecNumber evidence="1">6.3.2.8</ecNumber>
    </recommendedName>
    <alternativeName>
        <fullName evidence="1">UDP-N-acetylmuramoyl-L-alanine synthetase</fullName>
    </alternativeName>
</protein>
<keyword id="KW-0067">ATP-binding</keyword>
<keyword id="KW-0131">Cell cycle</keyword>
<keyword id="KW-0132">Cell division</keyword>
<keyword id="KW-0133">Cell shape</keyword>
<keyword id="KW-0961">Cell wall biogenesis/degradation</keyword>
<keyword id="KW-0963">Cytoplasm</keyword>
<keyword id="KW-0436">Ligase</keyword>
<keyword id="KW-0547">Nucleotide-binding</keyword>
<keyword id="KW-0573">Peptidoglycan synthesis</keyword>
<comment type="function">
    <text evidence="1">Cell wall formation.</text>
</comment>
<comment type="catalytic activity">
    <reaction evidence="1">
        <text>UDP-N-acetyl-alpha-D-muramate + L-alanine + ATP = UDP-N-acetyl-alpha-D-muramoyl-L-alanine + ADP + phosphate + H(+)</text>
        <dbReference type="Rhea" id="RHEA:23372"/>
        <dbReference type="ChEBI" id="CHEBI:15378"/>
        <dbReference type="ChEBI" id="CHEBI:30616"/>
        <dbReference type="ChEBI" id="CHEBI:43474"/>
        <dbReference type="ChEBI" id="CHEBI:57972"/>
        <dbReference type="ChEBI" id="CHEBI:70757"/>
        <dbReference type="ChEBI" id="CHEBI:83898"/>
        <dbReference type="ChEBI" id="CHEBI:456216"/>
        <dbReference type="EC" id="6.3.2.8"/>
    </reaction>
</comment>
<comment type="pathway">
    <text evidence="1">Cell wall biogenesis; peptidoglycan biosynthesis.</text>
</comment>
<comment type="subcellular location">
    <subcellularLocation>
        <location evidence="1">Cytoplasm</location>
    </subcellularLocation>
</comment>
<comment type="similarity">
    <text evidence="1">Belongs to the MurCDEF family.</text>
</comment>
<sequence length="491" mass="53496">MNTQQLAKLRSIVPEMRRVRHIHFVGIGGAGMGGIAEVLANEGYQISGSDLAPNPVTQQLTSLGATIFFNHRPENVRDASVVVVSSAISADNPEIVAAHEARIPVIRRAEMLAELMRFRHGIAIAGTHGKTTTTAMVSSIYAEAGLDPTFVNGGLVKAAGVHARLGHSRYLIAEADESDASFLHLQPMVAIVTNIEADHMDTYHGDFENLKQTFINFLHNLPFYGRAVMCVDDPVIRELLPRVGRQTTTYGFSEDADVRVEDYQQIGPQGHFTLLRQGMPDLHVTLNAPGRHNALNAAAAVAVATEEGIDDDAILRALESFQGTGRRFDFLGEFPLEPVNGKAGTAMLVDDYGHHPTEVDATIKAARAGWPDKKLVMLFQPHRYTRTRDLYDDFANVLTQVDALLMLDVYPAGEAPIPGADSRSLCRTIRNRGKIDPILVSDPAQVATMLAPVLTGNDLILVQGAGNVGKIARYLSEIKLKPQIQEEEQHG</sequence>
<feature type="chain" id="PRO_1000192109" description="UDP-N-acetylmuramate--L-alanine ligase">
    <location>
        <begin position="1"/>
        <end position="491"/>
    </location>
</feature>
<feature type="binding site" evidence="1">
    <location>
        <begin position="126"/>
        <end position="132"/>
    </location>
    <ligand>
        <name>ATP</name>
        <dbReference type="ChEBI" id="CHEBI:30616"/>
    </ligand>
</feature>
<gene>
    <name evidence="1" type="primary">murC</name>
    <name type="ordered locus">SPC_0138</name>
</gene>
<accession>C0Q5I7</accession>
<proteinExistence type="inferred from homology"/>
<organism>
    <name type="scientific">Salmonella paratyphi C (strain RKS4594)</name>
    <dbReference type="NCBI Taxonomy" id="476213"/>
    <lineage>
        <taxon>Bacteria</taxon>
        <taxon>Pseudomonadati</taxon>
        <taxon>Pseudomonadota</taxon>
        <taxon>Gammaproteobacteria</taxon>
        <taxon>Enterobacterales</taxon>
        <taxon>Enterobacteriaceae</taxon>
        <taxon>Salmonella</taxon>
    </lineage>
</organism>
<dbReference type="EC" id="6.3.2.8" evidence="1"/>
<dbReference type="EMBL" id="CP000857">
    <property type="protein sequence ID" value="ACN44329.1"/>
    <property type="molecule type" value="Genomic_DNA"/>
</dbReference>
<dbReference type="RefSeq" id="WP_001096071.1">
    <property type="nucleotide sequence ID" value="NC_012125.1"/>
</dbReference>
<dbReference type="SMR" id="C0Q5I7"/>
<dbReference type="KEGG" id="sei:SPC_0138"/>
<dbReference type="HOGENOM" id="CLU_028104_2_2_6"/>
<dbReference type="UniPathway" id="UPA00219"/>
<dbReference type="Proteomes" id="UP000001599">
    <property type="component" value="Chromosome"/>
</dbReference>
<dbReference type="GO" id="GO:0005737">
    <property type="term" value="C:cytoplasm"/>
    <property type="evidence" value="ECO:0007669"/>
    <property type="project" value="UniProtKB-SubCell"/>
</dbReference>
<dbReference type="GO" id="GO:0005524">
    <property type="term" value="F:ATP binding"/>
    <property type="evidence" value="ECO:0007669"/>
    <property type="project" value="UniProtKB-UniRule"/>
</dbReference>
<dbReference type="GO" id="GO:0008763">
    <property type="term" value="F:UDP-N-acetylmuramate-L-alanine ligase activity"/>
    <property type="evidence" value="ECO:0007669"/>
    <property type="project" value="UniProtKB-UniRule"/>
</dbReference>
<dbReference type="GO" id="GO:0051301">
    <property type="term" value="P:cell division"/>
    <property type="evidence" value="ECO:0007669"/>
    <property type="project" value="UniProtKB-KW"/>
</dbReference>
<dbReference type="GO" id="GO:0071555">
    <property type="term" value="P:cell wall organization"/>
    <property type="evidence" value="ECO:0007669"/>
    <property type="project" value="UniProtKB-KW"/>
</dbReference>
<dbReference type="GO" id="GO:0009252">
    <property type="term" value="P:peptidoglycan biosynthetic process"/>
    <property type="evidence" value="ECO:0007669"/>
    <property type="project" value="UniProtKB-UniRule"/>
</dbReference>
<dbReference type="GO" id="GO:0008360">
    <property type="term" value="P:regulation of cell shape"/>
    <property type="evidence" value="ECO:0007669"/>
    <property type="project" value="UniProtKB-KW"/>
</dbReference>
<dbReference type="FunFam" id="3.40.1190.10:FF:000001">
    <property type="entry name" value="UDP-N-acetylmuramate--L-alanine ligase"/>
    <property type="match status" value="1"/>
</dbReference>
<dbReference type="FunFam" id="3.40.50.720:FF:000046">
    <property type="entry name" value="UDP-N-acetylmuramate--L-alanine ligase"/>
    <property type="match status" value="1"/>
</dbReference>
<dbReference type="FunFam" id="3.90.190.20:FF:000001">
    <property type="entry name" value="UDP-N-acetylmuramate--L-alanine ligase"/>
    <property type="match status" value="1"/>
</dbReference>
<dbReference type="Gene3D" id="3.90.190.20">
    <property type="entry name" value="Mur ligase, C-terminal domain"/>
    <property type="match status" value="1"/>
</dbReference>
<dbReference type="Gene3D" id="3.40.1190.10">
    <property type="entry name" value="Mur-like, catalytic domain"/>
    <property type="match status" value="1"/>
</dbReference>
<dbReference type="Gene3D" id="3.40.50.720">
    <property type="entry name" value="NAD(P)-binding Rossmann-like Domain"/>
    <property type="match status" value="1"/>
</dbReference>
<dbReference type="HAMAP" id="MF_00046">
    <property type="entry name" value="MurC"/>
    <property type="match status" value="1"/>
</dbReference>
<dbReference type="InterPro" id="IPR036565">
    <property type="entry name" value="Mur-like_cat_sf"/>
</dbReference>
<dbReference type="InterPro" id="IPR004101">
    <property type="entry name" value="Mur_ligase_C"/>
</dbReference>
<dbReference type="InterPro" id="IPR036615">
    <property type="entry name" value="Mur_ligase_C_dom_sf"/>
</dbReference>
<dbReference type="InterPro" id="IPR013221">
    <property type="entry name" value="Mur_ligase_cen"/>
</dbReference>
<dbReference type="InterPro" id="IPR000713">
    <property type="entry name" value="Mur_ligase_N"/>
</dbReference>
<dbReference type="InterPro" id="IPR050061">
    <property type="entry name" value="MurCDEF_pg_biosynth"/>
</dbReference>
<dbReference type="InterPro" id="IPR005758">
    <property type="entry name" value="UDP-N-AcMur_Ala_ligase_MurC"/>
</dbReference>
<dbReference type="NCBIfam" id="TIGR01082">
    <property type="entry name" value="murC"/>
    <property type="match status" value="1"/>
</dbReference>
<dbReference type="PANTHER" id="PTHR43445:SF3">
    <property type="entry name" value="UDP-N-ACETYLMURAMATE--L-ALANINE LIGASE"/>
    <property type="match status" value="1"/>
</dbReference>
<dbReference type="PANTHER" id="PTHR43445">
    <property type="entry name" value="UDP-N-ACETYLMURAMATE--L-ALANINE LIGASE-RELATED"/>
    <property type="match status" value="1"/>
</dbReference>
<dbReference type="Pfam" id="PF01225">
    <property type="entry name" value="Mur_ligase"/>
    <property type="match status" value="1"/>
</dbReference>
<dbReference type="Pfam" id="PF02875">
    <property type="entry name" value="Mur_ligase_C"/>
    <property type="match status" value="1"/>
</dbReference>
<dbReference type="Pfam" id="PF08245">
    <property type="entry name" value="Mur_ligase_M"/>
    <property type="match status" value="1"/>
</dbReference>
<dbReference type="SUPFAM" id="SSF51984">
    <property type="entry name" value="MurCD N-terminal domain"/>
    <property type="match status" value="1"/>
</dbReference>
<dbReference type="SUPFAM" id="SSF53623">
    <property type="entry name" value="MurD-like peptide ligases, catalytic domain"/>
    <property type="match status" value="1"/>
</dbReference>
<dbReference type="SUPFAM" id="SSF53244">
    <property type="entry name" value="MurD-like peptide ligases, peptide-binding domain"/>
    <property type="match status" value="1"/>
</dbReference>
<name>MURC_SALPC</name>